<accession>Q0VMD9</accession>
<name>RSGA_ALCBS</name>
<proteinExistence type="inferred from homology"/>
<reference key="1">
    <citation type="journal article" date="2006" name="Nat. Biotechnol.">
        <title>Genome sequence of the ubiquitous hydrocarbon-degrading marine bacterium Alcanivorax borkumensis.</title>
        <authorList>
            <person name="Schneiker S."/>
            <person name="Martins dos Santos V.A.P."/>
            <person name="Bartels D."/>
            <person name="Bekel T."/>
            <person name="Brecht M."/>
            <person name="Buhrmester J."/>
            <person name="Chernikova T.N."/>
            <person name="Denaro R."/>
            <person name="Ferrer M."/>
            <person name="Gertler C."/>
            <person name="Goesmann A."/>
            <person name="Golyshina O.V."/>
            <person name="Kaminski F."/>
            <person name="Khachane A.N."/>
            <person name="Lang S."/>
            <person name="Linke B."/>
            <person name="McHardy A.C."/>
            <person name="Meyer F."/>
            <person name="Nechitaylo T."/>
            <person name="Puehler A."/>
            <person name="Regenhardt D."/>
            <person name="Rupp O."/>
            <person name="Sabirova J.S."/>
            <person name="Selbitschka W."/>
            <person name="Yakimov M.M."/>
            <person name="Timmis K.N."/>
            <person name="Vorhoelter F.-J."/>
            <person name="Weidner S."/>
            <person name="Kaiser O."/>
            <person name="Golyshin P.N."/>
        </authorList>
    </citation>
    <scope>NUCLEOTIDE SEQUENCE [LARGE SCALE GENOMIC DNA]</scope>
    <source>
        <strain>ATCC 700651 / DSM 11573 / NCIMB 13689 / SK2</strain>
    </source>
</reference>
<organism>
    <name type="scientific">Alcanivorax borkumensis (strain ATCC 700651 / DSM 11573 / NCIMB 13689 / SK2)</name>
    <dbReference type="NCBI Taxonomy" id="393595"/>
    <lineage>
        <taxon>Bacteria</taxon>
        <taxon>Pseudomonadati</taxon>
        <taxon>Pseudomonadota</taxon>
        <taxon>Gammaproteobacteria</taxon>
        <taxon>Oceanospirillales</taxon>
        <taxon>Alcanivoracaceae</taxon>
        <taxon>Alcanivorax</taxon>
    </lineage>
</organism>
<gene>
    <name evidence="1" type="primary">rsgA</name>
    <name type="ordered locus">ABO_2211</name>
</gene>
<feature type="chain" id="PRO_1000188025" description="Small ribosomal subunit biogenesis GTPase RsgA">
    <location>
        <begin position="1"/>
        <end position="352"/>
    </location>
</feature>
<feature type="domain" description="CP-type G" evidence="2">
    <location>
        <begin position="109"/>
        <end position="277"/>
    </location>
</feature>
<feature type="binding site" evidence="1">
    <location>
        <begin position="165"/>
        <end position="168"/>
    </location>
    <ligand>
        <name>GTP</name>
        <dbReference type="ChEBI" id="CHEBI:37565"/>
    </ligand>
</feature>
<feature type="binding site" evidence="1">
    <location>
        <begin position="219"/>
        <end position="227"/>
    </location>
    <ligand>
        <name>GTP</name>
        <dbReference type="ChEBI" id="CHEBI:37565"/>
    </ligand>
</feature>
<feature type="binding site" evidence="1">
    <location>
        <position position="301"/>
    </location>
    <ligand>
        <name>Zn(2+)</name>
        <dbReference type="ChEBI" id="CHEBI:29105"/>
    </ligand>
</feature>
<feature type="binding site" evidence="1">
    <location>
        <position position="306"/>
    </location>
    <ligand>
        <name>Zn(2+)</name>
        <dbReference type="ChEBI" id="CHEBI:29105"/>
    </ligand>
</feature>
<feature type="binding site" evidence="1">
    <location>
        <position position="308"/>
    </location>
    <ligand>
        <name>Zn(2+)</name>
        <dbReference type="ChEBI" id="CHEBI:29105"/>
    </ligand>
</feature>
<feature type="binding site" evidence="1">
    <location>
        <position position="314"/>
    </location>
    <ligand>
        <name>Zn(2+)</name>
        <dbReference type="ChEBI" id="CHEBI:29105"/>
    </ligand>
</feature>
<sequence length="352" mass="38932">MAKRKLNRRQRWRIEKIQAEKRDRANRRTDQQEILVADDLGDEQHGVITAHFGQQVEVESADGPGAENRTTRRCHFRATLEQLVVGDKVIWQPPKSEGLGVVVAIEPRDTVLKRPDMYGNLKPVAANVEQMLVVFAPLPTPSSSLLDRYLVAAELSGIAATLVLNKADLIDDTLRPFVDELSDMYRHLGYPVLEVCAHQREGLTPLHEALAGKTSVFVGQSGVGKSSLINGVLPEADLQVGELSSNSGLGQHTTVTARLVHLPTGGQLIDSPGIREFGLWHIGEDDLLHGYRELSELAGYCKFRNCSHRNEPGCALILAAQNGDIDEERLANFYQISDTLNEDGRERYSTDS</sequence>
<keyword id="KW-0963">Cytoplasm</keyword>
<keyword id="KW-0342">GTP-binding</keyword>
<keyword id="KW-0378">Hydrolase</keyword>
<keyword id="KW-0479">Metal-binding</keyword>
<keyword id="KW-0547">Nucleotide-binding</keyword>
<keyword id="KW-1185">Reference proteome</keyword>
<keyword id="KW-0690">Ribosome biogenesis</keyword>
<keyword id="KW-0694">RNA-binding</keyword>
<keyword id="KW-0699">rRNA-binding</keyword>
<keyword id="KW-0862">Zinc</keyword>
<comment type="function">
    <text evidence="1">One of several proteins that assist in the late maturation steps of the functional core of the 30S ribosomal subunit. Helps release RbfA from mature subunits. May play a role in the assembly of ribosomal proteins into the subunit. Circularly permuted GTPase that catalyzes slow GTP hydrolysis, GTPase activity is stimulated by the 30S ribosomal subunit.</text>
</comment>
<comment type="cofactor">
    <cofactor evidence="1">
        <name>Zn(2+)</name>
        <dbReference type="ChEBI" id="CHEBI:29105"/>
    </cofactor>
    <text evidence="1">Binds 1 zinc ion per subunit.</text>
</comment>
<comment type="subunit">
    <text evidence="1">Monomer. Associates with 30S ribosomal subunit, binds 16S rRNA.</text>
</comment>
<comment type="subcellular location">
    <subcellularLocation>
        <location evidence="1">Cytoplasm</location>
    </subcellularLocation>
</comment>
<comment type="similarity">
    <text evidence="1">Belongs to the TRAFAC class YlqF/YawG GTPase family. RsgA subfamily.</text>
</comment>
<evidence type="ECO:0000255" key="1">
    <source>
        <dbReference type="HAMAP-Rule" id="MF_01820"/>
    </source>
</evidence>
<evidence type="ECO:0000255" key="2">
    <source>
        <dbReference type="PROSITE-ProRule" id="PRU01058"/>
    </source>
</evidence>
<dbReference type="EC" id="3.6.1.-" evidence="1"/>
<dbReference type="EMBL" id="AM286690">
    <property type="protein sequence ID" value="CAL17659.1"/>
    <property type="molecule type" value="Genomic_DNA"/>
</dbReference>
<dbReference type="RefSeq" id="WP_011589487.1">
    <property type="nucleotide sequence ID" value="NC_008260.1"/>
</dbReference>
<dbReference type="SMR" id="Q0VMD9"/>
<dbReference type="STRING" id="393595.ABO_2211"/>
<dbReference type="KEGG" id="abo:ABO_2211"/>
<dbReference type="eggNOG" id="COG1162">
    <property type="taxonomic scope" value="Bacteria"/>
</dbReference>
<dbReference type="HOGENOM" id="CLU_033617_2_0_6"/>
<dbReference type="OrthoDB" id="9809485at2"/>
<dbReference type="Proteomes" id="UP000008871">
    <property type="component" value="Chromosome"/>
</dbReference>
<dbReference type="GO" id="GO:0005737">
    <property type="term" value="C:cytoplasm"/>
    <property type="evidence" value="ECO:0007669"/>
    <property type="project" value="UniProtKB-SubCell"/>
</dbReference>
<dbReference type="GO" id="GO:0005525">
    <property type="term" value="F:GTP binding"/>
    <property type="evidence" value="ECO:0007669"/>
    <property type="project" value="UniProtKB-UniRule"/>
</dbReference>
<dbReference type="GO" id="GO:0003924">
    <property type="term" value="F:GTPase activity"/>
    <property type="evidence" value="ECO:0007669"/>
    <property type="project" value="UniProtKB-UniRule"/>
</dbReference>
<dbReference type="GO" id="GO:0046872">
    <property type="term" value="F:metal ion binding"/>
    <property type="evidence" value="ECO:0007669"/>
    <property type="project" value="UniProtKB-KW"/>
</dbReference>
<dbReference type="GO" id="GO:0019843">
    <property type="term" value="F:rRNA binding"/>
    <property type="evidence" value="ECO:0007669"/>
    <property type="project" value="UniProtKB-KW"/>
</dbReference>
<dbReference type="GO" id="GO:0042274">
    <property type="term" value="P:ribosomal small subunit biogenesis"/>
    <property type="evidence" value="ECO:0007669"/>
    <property type="project" value="UniProtKB-UniRule"/>
</dbReference>
<dbReference type="CDD" id="cd01854">
    <property type="entry name" value="YjeQ_EngC"/>
    <property type="match status" value="1"/>
</dbReference>
<dbReference type="Gene3D" id="2.40.50.140">
    <property type="entry name" value="Nucleic acid-binding proteins"/>
    <property type="match status" value="1"/>
</dbReference>
<dbReference type="Gene3D" id="3.40.50.300">
    <property type="entry name" value="P-loop containing nucleotide triphosphate hydrolases"/>
    <property type="match status" value="1"/>
</dbReference>
<dbReference type="Gene3D" id="1.10.40.50">
    <property type="entry name" value="Probable gtpase engc, domain 3"/>
    <property type="match status" value="1"/>
</dbReference>
<dbReference type="HAMAP" id="MF_01820">
    <property type="entry name" value="GTPase_RsgA"/>
    <property type="match status" value="1"/>
</dbReference>
<dbReference type="InterPro" id="IPR030378">
    <property type="entry name" value="G_CP_dom"/>
</dbReference>
<dbReference type="InterPro" id="IPR012340">
    <property type="entry name" value="NA-bd_OB-fold"/>
</dbReference>
<dbReference type="InterPro" id="IPR027417">
    <property type="entry name" value="P-loop_NTPase"/>
</dbReference>
<dbReference type="InterPro" id="IPR004881">
    <property type="entry name" value="Ribosome_biogen_GTPase_RsgA"/>
</dbReference>
<dbReference type="InterPro" id="IPR010914">
    <property type="entry name" value="RsgA_GTPase_dom"/>
</dbReference>
<dbReference type="NCBIfam" id="NF008931">
    <property type="entry name" value="PRK12288.1"/>
    <property type="match status" value="1"/>
</dbReference>
<dbReference type="NCBIfam" id="TIGR00157">
    <property type="entry name" value="ribosome small subunit-dependent GTPase A"/>
    <property type="match status" value="1"/>
</dbReference>
<dbReference type="PANTHER" id="PTHR32120">
    <property type="entry name" value="SMALL RIBOSOMAL SUBUNIT BIOGENESIS GTPASE RSGA"/>
    <property type="match status" value="1"/>
</dbReference>
<dbReference type="PANTHER" id="PTHR32120:SF11">
    <property type="entry name" value="SMALL RIBOSOMAL SUBUNIT BIOGENESIS GTPASE RSGA 1, MITOCHONDRIAL-RELATED"/>
    <property type="match status" value="1"/>
</dbReference>
<dbReference type="Pfam" id="PF03193">
    <property type="entry name" value="RsgA_GTPase"/>
    <property type="match status" value="1"/>
</dbReference>
<dbReference type="SUPFAM" id="SSF52540">
    <property type="entry name" value="P-loop containing nucleoside triphosphate hydrolases"/>
    <property type="match status" value="1"/>
</dbReference>
<dbReference type="PROSITE" id="PS50936">
    <property type="entry name" value="ENGC_GTPASE"/>
    <property type="match status" value="1"/>
</dbReference>
<dbReference type="PROSITE" id="PS51721">
    <property type="entry name" value="G_CP"/>
    <property type="match status" value="1"/>
</dbReference>
<protein>
    <recommendedName>
        <fullName evidence="1">Small ribosomal subunit biogenesis GTPase RsgA</fullName>
        <ecNumber evidence="1">3.6.1.-</ecNumber>
    </recommendedName>
</protein>